<sequence length="232" mass="25055">MAKKGKKYVEAAKLVDRTKAYDVNEAIELVKKTNTAKFDATVEAAFRLGVDPRKNDQQIRGAVVLPNGTGKTQRVLVFAKGEKAKEAEAAGADYVGDADYINKIQQGWFDFDVIVATPDMMGEVGKIGRVLGPKGLMPNPKTGTVTFEVEKAVNEIKAGKVEYRVDKAGNIHVPIGKVSFEEGKLVENFATMYDTILKAKPAAAKGVYVKNVSVTSTMGPGIKVDPSTFNVK</sequence>
<name>RL1_BACLD</name>
<reference key="1">
    <citation type="journal article" date="2004" name="J. Mol. Microbiol. Biotechnol.">
        <title>The complete genome sequence of Bacillus licheniformis DSM13, an organism with great industrial potential.</title>
        <authorList>
            <person name="Veith B."/>
            <person name="Herzberg C."/>
            <person name="Steckel S."/>
            <person name="Feesche J."/>
            <person name="Maurer K.H."/>
            <person name="Ehrenreich P."/>
            <person name="Baeumer S."/>
            <person name="Henne A."/>
            <person name="Liesegang H."/>
            <person name="Merkl R."/>
            <person name="Ehrenreich A."/>
            <person name="Gottschalk G."/>
        </authorList>
    </citation>
    <scope>NUCLEOTIDE SEQUENCE [LARGE SCALE GENOMIC DNA]</scope>
    <source>
        <strain>ATCC 14580 / DSM 13 / JCM 2505 / CCUG 7422 / NBRC 12200 / NCIMB 9375 / NCTC 10341 / NRRL NRS-1264 / Gibson 46</strain>
    </source>
</reference>
<reference key="2">
    <citation type="journal article" date="2004" name="Genome Biol.">
        <title>Complete genome sequence of the industrial bacterium Bacillus licheniformis and comparisons with closely related Bacillus species.</title>
        <authorList>
            <person name="Rey M.W."/>
            <person name="Ramaiya P."/>
            <person name="Nelson B.A."/>
            <person name="Brody-Karpin S.D."/>
            <person name="Zaretsky E.J."/>
            <person name="Tang M."/>
            <person name="Lopez de Leon A."/>
            <person name="Xiang H."/>
            <person name="Gusti V."/>
            <person name="Clausen I.G."/>
            <person name="Olsen P.B."/>
            <person name="Rasmussen M.D."/>
            <person name="Andersen J.T."/>
            <person name="Joergensen P.L."/>
            <person name="Larsen T.S."/>
            <person name="Sorokin A."/>
            <person name="Bolotin A."/>
            <person name="Lapidus A."/>
            <person name="Galleron N."/>
            <person name="Ehrlich S.D."/>
            <person name="Berka R.M."/>
        </authorList>
    </citation>
    <scope>NUCLEOTIDE SEQUENCE [LARGE SCALE GENOMIC DNA]</scope>
    <source>
        <strain>ATCC 14580 / DSM 13 / JCM 2505 / CCUG 7422 / NBRC 12200 / NCIMB 9375 / NCTC 10341 / NRRL NRS-1264 / Gibson 46</strain>
    </source>
</reference>
<accession>Q65PB9</accession>
<accession>Q62ZQ8</accession>
<dbReference type="EMBL" id="AE017333">
    <property type="protein sequence ID" value="AAU39095.1"/>
    <property type="molecule type" value="Genomic_DNA"/>
</dbReference>
<dbReference type="EMBL" id="CP000002">
    <property type="protein sequence ID" value="AAU21750.1"/>
    <property type="molecule type" value="Genomic_DNA"/>
</dbReference>
<dbReference type="RefSeq" id="WP_003178302.1">
    <property type="nucleotide sequence ID" value="NC_006322.1"/>
</dbReference>
<dbReference type="SMR" id="Q65PB9"/>
<dbReference type="STRING" id="279010.BL02802"/>
<dbReference type="GeneID" id="92858915"/>
<dbReference type="KEGG" id="bld:BLi00121"/>
<dbReference type="KEGG" id="bli:BL02802"/>
<dbReference type="eggNOG" id="COG0081">
    <property type="taxonomic scope" value="Bacteria"/>
</dbReference>
<dbReference type="HOGENOM" id="CLU_062853_0_0_9"/>
<dbReference type="Proteomes" id="UP000000606">
    <property type="component" value="Chromosome"/>
</dbReference>
<dbReference type="GO" id="GO:0015934">
    <property type="term" value="C:large ribosomal subunit"/>
    <property type="evidence" value="ECO:0007669"/>
    <property type="project" value="InterPro"/>
</dbReference>
<dbReference type="GO" id="GO:0019843">
    <property type="term" value="F:rRNA binding"/>
    <property type="evidence" value="ECO:0007669"/>
    <property type="project" value="UniProtKB-UniRule"/>
</dbReference>
<dbReference type="GO" id="GO:0003735">
    <property type="term" value="F:structural constituent of ribosome"/>
    <property type="evidence" value="ECO:0007669"/>
    <property type="project" value="InterPro"/>
</dbReference>
<dbReference type="GO" id="GO:0000049">
    <property type="term" value="F:tRNA binding"/>
    <property type="evidence" value="ECO:0007669"/>
    <property type="project" value="UniProtKB-KW"/>
</dbReference>
<dbReference type="GO" id="GO:0006417">
    <property type="term" value="P:regulation of translation"/>
    <property type="evidence" value="ECO:0007669"/>
    <property type="project" value="UniProtKB-KW"/>
</dbReference>
<dbReference type="GO" id="GO:0006412">
    <property type="term" value="P:translation"/>
    <property type="evidence" value="ECO:0007669"/>
    <property type="project" value="UniProtKB-UniRule"/>
</dbReference>
<dbReference type="CDD" id="cd00403">
    <property type="entry name" value="Ribosomal_L1"/>
    <property type="match status" value="1"/>
</dbReference>
<dbReference type="FunFam" id="3.40.50.790:FF:000001">
    <property type="entry name" value="50S ribosomal protein L1"/>
    <property type="match status" value="1"/>
</dbReference>
<dbReference type="Gene3D" id="3.30.190.20">
    <property type="match status" value="1"/>
</dbReference>
<dbReference type="Gene3D" id="3.40.50.790">
    <property type="match status" value="1"/>
</dbReference>
<dbReference type="HAMAP" id="MF_01318_B">
    <property type="entry name" value="Ribosomal_uL1_B"/>
    <property type="match status" value="1"/>
</dbReference>
<dbReference type="InterPro" id="IPR005878">
    <property type="entry name" value="Ribosom_uL1_bac-type"/>
</dbReference>
<dbReference type="InterPro" id="IPR002143">
    <property type="entry name" value="Ribosomal_uL1"/>
</dbReference>
<dbReference type="InterPro" id="IPR023674">
    <property type="entry name" value="Ribosomal_uL1-like"/>
</dbReference>
<dbReference type="InterPro" id="IPR028364">
    <property type="entry name" value="Ribosomal_uL1/biogenesis"/>
</dbReference>
<dbReference type="InterPro" id="IPR016095">
    <property type="entry name" value="Ribosomal_uL1_3-a/b-sand"/>
</dbReference>
<dbReference type="InterPro" id="IPR023673">
    <property type="entry name" value="Ribosomal_uL1_CS"/>
</dbReference>
<dbReference type="NCBIfam" id="TIGR01169">
    <property type="entry name" value="rplA_bact"/>
    <property type="match status" value="1"/>
</dbReference>
<dbReference type="PANTHER" id="PTHR36427">
    <property type="entry name" value="54S RIBOSOMAL PROTEIN L1, MITOCHONDRIAL"/>
    <property type="match status" value="1"/>
</dbReference>
<dbReference type="PANTHER" id="PTHR36427:SF3">
    <property type="entry name" value="LARGE RIBOSOMAL SUBUNIT PROTEIN UL1M"/>
    <property type="match status" value="1"/>
</dbReference>
<dbReference type="Pfam" id="PF00687">
    <property type="entry name" value="Ribosomal_L1"/>
    <property type="match status" value="1"/>
</dbReference>
<dbReference type="PIRSF" id="PIRSF002155">
    <property type="entry name" value="Ribosomal_L1"/>
    <property type="match status" value="1"/>
</dbReference>
<dbReference type="SUPFAM" id="SSF56808">
    <property type="entry name" value="Ribosomal protein L1"/>
    <property type="match status" value="1"/>
</dbReference>
<dbReference type="PROSITE" id="PS01199">
    <property type="entry name" value="RIBOSOMAL_L1"/>
    <property type="match status" value="1"/>
</dbReference>
<comment type="function">
    <text evidence="1">Binds directly to 23S rRNA. The L1 stalk is quite mobile in the ribosome, and is involved in E site tRNA release.</text>
</comment>
<comment type="function">
    <text evidence="1">Protein L1 is also a translational repressor protein, it controls the translation of the L11 operon by binding to its mRNA.</text>
</comment>
<comment type="subunit">
    <text evidence="1">Part of the 50S ribosomal subunit.</text>
</comment>
<comment type="similarity">
    <text evidence="1">Belongs to the universal ribosomal protein uL1 family.</text>
</comment>
<organism>
    <name type="scientific">Bacillus licheniformis (strain ATCC 14580 / DSM 13 / JCM 2505 / CCUG 7422 / NBRC 12200 / NCIMB 9375 / NCTC 10341 / NRRL NRS-1264 / Gibson 46)</name>
    <dbReference type="NCBI Taxonomy" id="279010"/>
    <lineage>
        <taxon>Bacteria</taxon>
        <taxon>Bacillati</taxon>
        <taxon>Bacillota</taxon>
        <taxon>Bacilli</taxon>
        <taxon>Bacillales</taxon>
        <taxon>Bacillaceae</taxon>
        <taxon>Bacillus</taxon>
    </lineage>
</organism>
<feature type="chain" id="PRO_0000230590" description="Large ribosomal subunit protein uL1">
    <location>
        <begin position="1"/>
        <end position="232"/>
    </location>
</feature>
<keyword id="KW-1185">Reference proteome</keyword>
<keyword id="KW-0678">Repressor</keyword>
<keyword id="KW-0687">Ribonucleoprotein</keyword>
<keyword id="KW-0689">Ribosomal protein</keyword>
<keyword id="KW-0694">RNA-binding</keyword>
<keyword id="KW-0699">rRNA-binding</keyword>
<keyword id="KW-0810">Translation regulation</keyword>
<keyword id="KW-0820">tRNA-binding</keyword>
<gene>
    <name evidence="1" type="primary">rplA</name>
    <name type="ordered locus">BLi00121</name>
    <name type="ordered locus">BL02802</name>
</gene>
<evidence type="ECO:0000255" key="1">
    <source>
        <dbReference type="HAMAP-Rule" id="MF_01318"/>
    </source>
</evidence>
<evidence type="ECO:0000305" key="2"/>
<proteinExistence type="inferred from homology"/>
<protein>
    <recommendedName>
        <fullName evidence="1">Large ribosomal subunit protein uL1</fullName>
    </recommendedName>
    <alternativeName>
        <fullName evidence="2">50S ribosomal protein L1</fullName>
    </alternativeName>
</protein>